<keyword id="KW-0002">3D-structure</keyword>
<keyword id="KW-0963">Cytoplasm</keyword>
<keyword id="KW-0378">Hydrolase</keyword>
<keyword id="KW-0645">Protease</keyword>
<keyword id="KW-0720">Serine protease</keyword>
<organism>
    <name type="scientific">Staphylococcus aureus (strain MW2)</name>
    <dbReference type="NCBI Taxonomy" id="196620"/>
    <lineage>
        <taxon>Bacteria</taxon>
        <taxon>Bacillati</taxon>
        <taxon>Bacillota</taxon>
        <taxon>Bacilli</taxon>
        <taxon>Bacillales</taxon>
        <taxon>Staphylococcaceae</taxon>
        <taxon>Staphylococcus</taxon>
    </lineage>
</organism>
<reference key="1">
    <citation type="journal article" date="2002" name="Lancet">
        <title>Genome and virulence determinants of high virulence community-acquired MRSA.</title>
        <authorList>
            <person name="Baba T."/>
            <person name="Takeuchi F."/>
            <person name="Kuroda M."/>
            <person name="Yuzawa H."/>
            <person name="Aoki K."/>
            <person name="Oguchi A."/>
            <person name="Nagai Y."/>
            <person name="Iwama N."/>
            <person name="Asano K."/>
            <person name="Naimi T."/>
            <person name="Kuroda H."/>
            <person name="Cui L."/>
            <person name="Yamamoto K."/>
            <person name="Hiramatsu K."/>
        </authorList>
    </citation>
    <scope>NUCLEOTIDE SEQUENCE [LARGE SCALE GENOMIC DNA]</scope>
    <source>
        <strain>MW2</strain>
    </source>
</reference>
<gene>
    <name evidence="1" type="primary">clpP</name>
    <name type="ordered locus">MW0730</name>
</gene>
<proteinExistence type="evidence at protein level"/>
<comment type="function">
    <text evidence="1">Cleaves peptides in various proteins in a process that requires ATP hydrolysis. Has a chymotrypsin-like activity. Plays a major role in the degradation of misfolded proteins.</text>
</comment>
<comment type="catalytic activity">
    <reaction evidence="1">
        <text>Hydrolysis of proteins to small peptides in the presence of ATP and magnesium. alpha-casein is the usual test substrate. In the absence of ATP, only oligopeptides shorter than five residues are hydrolyzed (such as succinyl-Leu-Tyr-|-NHMec, and Leu-Tyr-Leu-|-Tyr-Trp, in which cleavage of the -Tyr-|-Leu- and -Tyr-|-Trp bonds also occurs).</text>
        <dbReference type="EC" id="3.4.21.92"/>
    </reaction>
</comment>
<comment type="subunit">
    <text evidence="1">Fourteen ClpP subunits assemble into 2 heptameric rings which stack back to back to give a disk-like structure with a central cavity, resembling the structure of eukaryotic proteasomes.</text>
</comment>
<comment type="interaction">
    <interactant intactId="EBI-5260070">
        <id>P63786</id>
    </interactant>
    <interactant intactId="EBI-5260070">
        <id>P63786</id>
        <label>clpP</label>
    </interactant>
    <organismsDiffer>false</organismsDiffer>
    <experiments>6</experiments>
</comment>
<comment type="subcellular location">
    <subcellularLocation>
        <location evidence="1">Cytoplasm</location>
    </subcellularLocation>
</comment>
<comment type="similarity">
    <text evidence="1">Belongs to the peptidase S14 family.</text>
</comment>
<evidence type="ECO:0000255" key="1">
    <source>
        <dbReference type="HAMAP-Rule" id="MF_00444"/>
    </source>
</evidence>
<evidence type="ECO:0007829" key="2">
    <source>
        <dbReference type="PDB" id="3STA"/>
    </source>
</evidence>
<protein>
    <recommendedName>
        <fullName evidence="1">ATP-dependent Clp protease proteolytic subunit</fullName>
        <ecNumber evidence="1">3.4.21.92</ecNumber>
    </recommendedName>
    <alternativeName>
        <fullName evidence="1">Endopeptidase Clp</fullName>
    </alternativeName>
</protein>
<sequence>MNLIPTVIETTNRGERAYDIYSRLLKDRIIMLGSQIDDNVANSIVSQLLFLQAQDSEKDIYLYINSPGGSVTAGFAIYDTIQHIKPDVQTICIGMAASMGSFLLAAGAKGKRFALPNAEVMIHQPLGGAQGQATEIEIAANHILKTREKLNRILSERTGQSIEKIQKDTDRDNFLTAEEAKEYGLIDEVMVPETK</sequence>
<feature type="chain" id="PRO_0000179654" description="ATP-dependent Clp protease proteolytic subunit">
    <location>
        <begin position="1"/>
        <end position="195"/>
    </location>
</feature>
<feature type="active site" description="Nucleophile" evidence="1">
    <location>
        <position position="98"/>
    </location>
</feature>
<feature type="active site" evidence="1">
    <location>
        <position position="123"/>
    </location>
</feature>
<feature type="strand" evidence="2">
    <location>
        <begin position="6"/>
        <end position="10"/>
    </location>
</feature>
<feature type="strand" evidence="2">
    <location>
        <begin position="15"/>
        <end position="19"/>
    </location>
</feature>
<feature type="helix" evidence="2">
    <location>
        <begin position="20"/>
        <end position="25"/>
    </location>
</feature>
<feature type="turn" evidence="2">
    <location>
        <begin position="26"/>
        <end position="28"/>
    </location>
</feature>
<feature type="strand" evidence="2">
    <location>
        <begin position="29"/>
        <end position="32"/>
    </location>
</feature>
<feature type="helix" evidence="2">
    <location>
        <begin position="38"/>
        <end position="54"/>
    </location>
</feature>
<feature type="strand" evidence="2">
    <location>
        <begin position="56"/>
        <end position="58"/>
    </location>
</feature>
<feature type="strand" evidence="2">
    <location>
        <begin position="60"/>
        <end position="66"/>
    </location>
</feature>
<feature type="helix" evidence="2">
    <location>
        <begin position="71"/>
        <end position="83"/>
    </location>
</feature>
<feature type="strand" evidence="2">
    <location>
        <begin position="84"/>
        <end position="86"/>
    </location>
</feature>
<feature type="strand" evidence="2">
    <location>
        <begin position="88"/>
        <end position="97"/>
    </location>
</feature>
<feature type="helix" evidence="2">
    <location>
        <begin position="99"/>
        <end position="104"/>
    </location>
</feature>
<feature type="strand" evidence="2">
    <location>
        <begin position="112"/>
        <end position="114"/>
    </location>
</feature>
<feature type="strand" evidence="2">
    <location>
        <begin position="119"/>
        <end position="122"/>
    </location>
</feature>
<feature type="strand" evidence="2">
    <location>
        <begin position="126"/>
        <end position="132"/>
    </location>
</feature>
<feature type="helix" evidence="2">
    <location>
        <begin position="133"/>
        <end position="158"/>
    </location>
</feature>
<feature type="helix" evidence="2">
    <location>
        <begin position="162"/>
        <end position="168"/>
    </location>
</feature>
<feature type="strand" evidence="2">
    <location>
        <begin position="173"/>
        <end position="176"/>
    </location>
</feature>
<feature type="helix" evidence="2">
    <location>
        <begin position="177"/>
        <end position="182"/>
    </location>
</feature>
<feature type="strand" evidence="2">
    <location>
        <begin position="187"/>
        <end position="189"/>
    </location>
</feature>
<name>CLPP_STAAW</name>
<dbReference type="EC" id="3.4.21.92" evidence="1"/>
<dbReference type="EMBL" id="BA000033">
    <property type="protein sequence ID" value="BAB94595.1"/>
    <property type="molecule type" value="Genomic_DNA"/>
</dbReference>
<dbReference type="RefSeq" id="WP_001049165.1">
    <property type="nucleotide sequence ID" value="NC_003923.1"/>
</dbReference>
<dbReference type="PDB" id="3ST9">
    <property type="method" value="X-ray"/>
    <property type="resolution" value="2.43 A"/>
    <property type="chains" value="A/B/C/D/E/F/G=1-195"/>
</dbReference>
<dbReference type="PDB" id="3STA">
    <property type="method" value="X-ray"/>
    <property type="resolution" value="2.28 A"/>
    <property type="chains" value="A/B/C/E/F/G/I/K/L/M/N/S/T/V=1-195"/>
</dbReference>
<dbReference type="PDB" id="4EMM">
    <property type="method" value="X-ray"/>
    <property type="resolution" value="2.40 A"/>
    <property type="chains" value="A/B/C/D/E/F/G/H/I/J/K/L/M/V=1-195"/>
</dbReference>
<dbReference type="PDB" id="4EMP">
    <property type="method" value="X-ray"/>
    <property type="resolution" value="2.70 A"/>
    <property type="chains" value="A/B/C/E/F/G/I/K/L/M/N/S/T/V=1-195"/>
</dbReference>
<dbReference type="PDBsum" id="3ST9"/>
<dbReference type="PDBsum" id="3STA"/>
<dbReference type="PDBsum" id="4EMM"/>
<dbReference type="PDBsum" id="4EMP"/>
<dbReference type="SMR" id="P63786"/>
<dbReference type="MEROPS" id="S14.001"/>
<dbReference type="GeneID" id="98345115"/>
<dbReference type="KEGG" id="sam:MW0730"/>
<dbReference type="HOGENOM" id="CLU_058707_3_2_9"/>
<dbReference type="BRENDA" id="3.4.21.92">
    <property type="organism ID" value="3352"/>
</dbReference>
<dbReference type="EvolutionaryTrace" id="P63786"/>
<dbReference type="PHI-base" id="PHI:3005"/>
<dbReference type="GO" id="GO:0005737">
    <property type="term" value="C:cytoplasm"/>
    <property type="evidence" value="ECO:0007669"/>
    <property type="project" value="UniProtKB-SubCell"/>
</dbReference>
<dbReference type="GO" id="GO:0009368">
    <property type="term" value="C:endopeptidase Clp complex"/>
    <property type="evidence" value="ECO:0007669"/>
    <property type="project" value="TreeGrafter"/>
</dbReference>
<dbReference type="GO" id="GO:0004176">
    <property type="term" value="F:ATP-dependent peptidase activity"/>
    <property type="evidence" value="ECO:0007669"/>
    <property type="project" value="InterPro"/>
</dbReference>
<dbReference type="GO" id="GO:0051117">
    <property type="term" value="F:ATPase binding"/>
    <property type="evidence" value="ECO:0007669"/>
    <property type="project" value="TreeGrafter"/>
</dbReference>
<dbReference type="GO" id="GO:0042802">
    <property type="term" value="F:identical protein binding"/>
    <property type="evidence" value="ECO:0000353"/>
    <property type="project" value="IntAct"/>
</dbReference>
<dbReference type="GO" id="GO:0004252">
    <property type="term" value="F:serine-type endopeptidase activity"/>
    <property type="evidence" value="ECO:0007669"/>
    <property type="project" value="UniProtKB-UniRule"/>
</dbReference>
<dbReference type="GO" id="GO:0006515">
    <property type="term" value="P:protein quality control for misfolded or incompletely synthesized proteins"/>
    <property type="evidence" value="ECO:0007669"/>
    <property type="project" value="TreeGrafter"/>
</dbReference>
<dbReference type="CDD" id="cd07017">
    <property type="entry name" value="S14_ClpP_2"/>
    <property type="match status" value="1"/>
</dbReference>
<dbReference type="FunFam" id="3.90.226.10:FF:000001">
    <property type="entry name" value="ATP-dependent Clp protease proteolytic subunit"/>
    <property type="match status" value="1"/>
</dbReference>
<dbReference type="Gene3D" id="3.90.226.10">
    <property type="entry name" value="2-enoyl-CoA Hydratase, Chain A, domain 1"/>
    <property type="match status" value="1"/>
</dbReference>
<dbReference type="HAMAP" id="MF_00444">
    <property type="entry name" value="ClpP"/>
    <property type="match status" value="1"/>
</dbReference>
<dbReference type="InterPro" id="IPR001907">
    <property type="entry name" value="ClpP"/>
</dbReference>
<dbReference type="InterPro" id="IPR029045">
    <property type="entry name" value="ClpP/crotonase-like_dom_sf"/>
</dbReference>
<dbReference type="InterPro" id="IPR023562">
    <property type="entry name" value="ClpP/TepA"/>
</dbReference>
<dbReference type="InterPro" id="IPR033135">
    <property type="entry name" value="ClpP_His_AS"/>
</dbReference>
<dbReference type="InterPro" id="IPR018215">
    <property type="entry name" value="ClpP_Ser_AS"/>
</dbReference>
<dbReference type="NCBIfam" id="TIGR00493">
    <property type="entry name" value="clpP"/>
    <property type="match status" value="1"/>
</dbReference>
<dbReference type="NCBIfam" id="NF001368">
    <property type="entry name" value="PRK00277.1"/>
    <property type="match status" value="1"/>
</dbReference>
<dbReference type="NCBIfam" id="NF009205">
    <property type="entry name" value="PRK12553.1"/>
    <property type="match status" value="1"/>
</dbReference>
<dbReference type="PANTHER" id="PTHR10381">
    <property type="entry name" value="ATP-DEPENDENT CLP PROTEASE PROTEOLYTIC SUBUNIT"/>
    <property type="match status" value="1"/>
</dbReference>
<dbReference type="PANTHER" id="PTHR10381:SF70">
    <property type="entry name" value="ATP-DEPENDENT CLP PROTEASE PROTEOLYTIC SUBUNIT"/>
    <property type="match status" value="1"/>
</dbReference>
<dbReference type="Pfam" id="PF00574">
    <property type="entry name" value="CLP_protease"/>
    <property type="match status" value="1"/>
</dbReference>
<dbReference type="PRINTS" id="PR00127">
    <property type="entry name" value="CLPPROTEASEP"/>
</dbReference>
<dbReference type="SUPFAM" id="SSF52096">
    <property type="entry name" value="ClpP/crotonase"/>
    <property type="match status" value="1"/>
</dbReference>
<dbReference type="PROSITE" id="PS00382">
    <property type="entry name" value="CLP_PROTEASE_HIS"/>
    <property type="match status" value="1"/>
</dbReference>
<dbReference type="PROSITE" id="PS00381">
    <property type="entry name" value="CLP_PROTEASE_SER"/>
    <property type="match status" value="1"/>
</dbReference>
<accession>P63786</accession>
<accession>Q99VK9</accession>